<feature type="transit peptide" description="Mitochondrion" evidence="5">
    <location>
        <begin position="1"/>
        <end position="27"/>
    </location>
</feature>
<feature type="chain" id="PRO_5003054138" description="Cysteine desulfurase, mitochondrial">
    <location>
        <begin position="28"/>
        <end position="503"/>
    </location>
</feature>
<feature type="region of interest" description="Disordered" evidence="6">
    <location>
        <begin position="34"/>
        <end position="58"/>
    </location>
</feature>
<feature type="compositionally biased region" description="Low complexity" evidence="6">
    <location>
        <begin position="34"/>
        <end position="50"/>
    </location>
</feature>
<feature type="active site" description="Cysteine persulfide intermediate" evidence="2">
    <location>
        <position position="427"/>
    </location>
</feature>
<feature type="binding site" evidence="3">
    <location>
        <begin position="172"/>
        <end position="173"/>
    </location>
    <ligand>
        <name>pyridoxal 5'-phosphate</name>
        <dbReference type="ChEBI" id="CHEBI:597326"/>
    </ligand>
</feature>
<feature type="binding site" evidence="1">
    <location>
        <position position="254"/>
    </location>
    <ligand>
        <name>pyridoxal 5'-phosphate</name>
        <dbReference type="ChEBI" id="CHEBI:597326"/>
    </ligand>
</feature>
<feature type="binding site" evidence="3">
    <location>
        <position position="282"/>
    </location>
    <ligand>
        <name>pyridoxal 5'-phosphate</name>
        <dbReference type="ChEBI" id="CHEBI:597326"/>
    </ligand>
</feature>
<feature type="binding site" evidence="3">
    <location>
        <begin position="302"/>
        <end position="304"/>
    </location>
    <ligand>
        <name>pyridoxal 5'-phosphate</name>
        <dbReference type="ChEBI" id="CHEBI:597326"/>
    </ligand>
</feature>
<feature type="binding site" evidence="3">
    <location>
        <position position="342"/>
    </location>
    <ligand>
        <name>pyridoxal 5'-phosphate</name>
        <dbReference type="ChEBI" id="CHEBI:597326"/>
    </ligand>
</feature>
<feature type="binding site" description="via persulfide group" evidence="1">
    <location>
        <position position="427"/>
    </location>
    <ligand>
        <name>[2Fe-2S] cluster</name>
        <dbReference type="ChEBI" id="CHEBI:190135"/>
    </ligand>
</feature>
<feature type="modified residue" description="N6-(pyridoxal phosphate)lysine" evidence="3">
    <location>
        <position position="305"/>
    </location>
</feature>
<keyword id="KW-0408">Iron</keyword>
<keyword id="KW-0411">Iron-sulfur</keyword>
<keyword id="KW-0479">Metal-binding</keyword>
<keyword id="KW-0496">Mitochondrion</keyword>
<keyword id="KW-0663">Pyridoxal phosphate</keyword>
<keyword id="KW-1185">Reference proteome</keyword>
<keyword id="KW-0808">Transferase</keyword>
<keyword id="KW-0809">Transit peptide</keyword>
<keyword id="KW-0819">tRNA processing</keyword>
<dbReference type="EC" id="2.8.1.7" evidence="4"/>
<dbReference type="EMBL" id="ABSU01000003">
    <property type="protein sequence ID" value="EFE35688.1"/>
    <property type="status" value="ALT_SEQ"/>
    <property type="molecule type" value="Genomic_DNA"/>
</dbReference>
<dbReference type="RefSeq" id="XP_003016333.1">
    <property type="nucleotide sequence ID" value="XM_003016287.1"/>
</dbReference>
<dbReference type="SMR" id="P0DN31"/>
<dbReference type="STRING" id="663331.P0DN31"/>
<dbReference type="KEGG" id="abe:ARB_05732"/>
<dbReference type="eggNOG" id="KOG1549">
    <property type="taxonomic scope" value="Eukaryota"/>
</dbReference>
<dbReference type="OrthoDB" id="10250117at2759"/>
<dbReference type="Proteomes" id="UP000008866">
    <property type="component" value="Unassembled WGS sequence"/>
</dbReference>
<dbReference type="GO" id="GO:1990221">
    <property type="term" value="C:L-cysteine desulfurase complex"/>
    <property type="evidence" value="ECO:0007669"/>
    <property type="project" value="UniProtKB-ARBA"/>
</dbReference>
<dbReference type="GO" id="GO:0005739">
    <property type="term" value="C:mitochondrion"/>
    <property type="evidence" value="ECO:0007669"/>
    <property type="project" value="UniProtKB-SubCell"/>
</dbReference>
<dbReference type="GO" id="GO:0005634">
    <property type="term" value="C:nucleus"/>
    <property type="evidence" value="ECO:0007669"/>
    <property type="project" value="TreeGrafter"/>
</dbReference>
<dbReference type="GO" id="GO:0031071">
    <property type="term" value="F:cysteine desulfurase activity"/>
    <property type="evidence" value="ECO:0007669"/>
    <property type="project" value="UniProtKB-EC"/>
</dbReference>
<dbReference type="GO" id="GO:0051536">
    <property type="term" value="F:iron-sulfur cluster binding"/>
    <property type="evidence" value="ECO:0007669"/>
    <property type="project" value="UniProtKB-KW"/>
</dbReference>
<dbReference type="GO" id="GO:0046872">
    <property type="term" value="F:metal ion binding"/>
    <property type="evidence" value="ECO:0007669"/>
    <property type="project" value="UniProtKB-KW"/>
</dbReference>
<dbReference type="GO" id="GO:0030170">
    <property type="term" value="F:pyridoxal phosphate binding"/>
    <property type="evidence" value="ECO:0007669"/>
    <property type="project" value="InterPro"/>
</dbReference>
<dbReference type="GO" id="GO:0044571">
    <property type="term" value="P:[2Fe-2S] cluster assembly"/>
    <property type="evidence" value="ECO:0007669"/>
    <property type="project" value="InterPro"/>
</dbReference>
<dbReference type="GO" id="GO:0008033">
    <property type="term" value="P:tRNA processing"/>
    <property type="evidence" value="ECO:0007669"/>
    <property type="project" value="UniProtKB-KW"/>
</dbReference>
<dbReference type="FunFam" id="3.40.640.10:FF:000003">
    <property type="entry name" value="Cysteine desulfurase IscS"/>
    <property type="match status" value="1"/>
</dbReference>
<dbReference type="FunFam" id="3.90.1150.10:FF:000002">
    <property type="entry name" value="Cysteine desulfurase IscS"/>
    <property type="match status" value="1"/>
</dbReference>
<dbReference type="Gene3D" id="3.90.1150.10">
    <property type="entry name" value="Aspartate Aminotransferase, domain 1"/>
    <property type="match status" value="1"/>
</dbReference>
<dbReference type="Gene3D" id="3.40.640.10">
    <property type="entry name" value="Type I PLP-dependent aspartate aminotransferase-like (Major domain)"/>
    <property type="match status" value="1"/>
</dbReference>
<dbReference type="HAMAP" id="MF_00331">
    <property type="entry name" value="Cys_desulf_IscS"/>
    <property type="match status" value="1"/>
</dbReference>
<dbReference type="InterPro" id="IPR000192">
    <property type="entry name" value="Aminotrans_V_dom"/>
</dbReference>
<dbReference type="InterPro" id="IPR020578">
    <property type="entry name" value="Aminotrans_V_PyrdxlP_BS"/>
</dbReference>
<dbReference type="InterPro" id="IPR010240">
    <property type="entry name" value="Cys_deSase_IscS"/>
</dbReference>
<dbReference type="InterPro" id="IPR015424">
    <property type="entry name" value="PyrdxlP-dep_Trfase"/>
</dbReference>
<dbReference type="InterPro" id="IPR015421">
    <property type="entry name" value="PyrdxlP-dep_Trfase_major"/>
</dbReference>
<dbReference type="InterPro" id="IPR015422">
    <property type="entry name" value="PyrdxlP-dep_Trfase_small"/>
</dbReference>
<dbReference type="NCBIfam" id="TIGR02006">
    <property type="entry name" value="IscS"/>
    <property type="match status" value="1"/>
</dbReference>
<dbReference type="NCBIfam" id="NF010611">
    <property type="entry name" value="PRK14012.1"/>
    <property type="match status" value="1"/>
</dbReference>
<dbReference type="PANTHER" id="PTHR11601:SF34">
    <property type="entry name" value="CYSTEINE DESULFURASE"/>
    <property type="match status" value="1"/>
</dbReference>
<dbReference type="PANTHER" id="PTHR11601">
    <property type="entry name" value="CYSTEINE DESULFURYLASE FAMILY MEMBER"/>
    <property type="match status" value="1"/>
</dbReference>
<dbReference type="Pfam" id="PF00266">
    <property type="entry name" value="Aminotran_5"/>
    <property type="match status" value="1"/>
</dbReference>
<dbReference type="SUPFAM" id="SSF53383">
    <property type="entry name" value="PLP-dependent transferases"/>
    <property type="match status" value="1"/>
</dbReference>
<dbReference type="PROSITE" id="PS00595">
    <property type="entry name" value="AA_TRANSFER_CLASS_5"/>
    <property type="match status" value="1"/>
</dbReference>
<reference key="1">
    <citation type="journal article" date="2011" name="Genome Biol.">
        <title>Comparative and functional genomics provide insights into the pathogenicity of dermatophytic fungi.</title>
        <authorList>
            <person name="Burmester A."/>
            <person name="Shelest E."/>
            <person name="Gloeckner G."/>
            <person name="Heddergott C."/>
            <person name="Schindler S."/>
            <person name="Staib P."/>
            <person name="Heidel A."/>
            <person name="Felder M."/>
            <person name="Petzold A."/>
            <person name="Szafranski K."/>
            <person name="Feuermann M."/>
            <person name="Pedruzzi I."/>
            <person name="Priebe S."/>
            <person name="Groth M."/>
            <person name="Winkler R."/>
            <person name="Li W."/>
            <person name="Kniemeyer O."/>
            <person name="Schroeckh V."/>
            <person name="Hertweck C."/>
            <person name="Hube B."/>
            <person name="White T.C."/>
            <person name="Platzer M."/>
            <person name="Guthke R."/>
            <person name="Heitman J."/>
            <person name="Woestemeyer J."/>
            <person name="Zipfel P.F."/>
            <person name="Monod M."/>
            <person name="Brakhage A.A."/>
        </authorList>
    </citation>
    <scope>NUCLEOTIDE SEQUENCE [LARGE SCALE GENOMIC DNA]</scope>
    <source>
        <strain>ATCC MYA-4681 / CBS 112371</strain>
    </source>
</reference>
<evidence type="ECO:0000250" key="1">
    <source>
        <dbReference type="UniProtKB" id="O29689"/>
    </source>
</evidence>
<evidence type="ECO:0000250" key="2">
    <source>
        <dbReference type="UniProtKB" id="P0A6B7"/>
    </source>
</evidence>
<evidence type="ECO:0000250" key="3">
    <source>
        <dbReference type="UniProtKB" id="P0A6B9"/>
    </source>
</evidence>
<evidence type="ECO:0000250" key="4">
    <source>
        <dbReference type="UniProtKB" id="P25374"/>
    </source>
</evidence>
<evidence type="ECO:0000255" key="5"/>
<evidence type="ECO:0000256" key="6">
    <source>
        <dbReference type="SAM" id="MobiDB-lite"/>
    </source>
</evidence>
<evidence type="ECO:0000305" key="7"/>
<organism>
    <name type="scientific">Arthroderma benhamiae (strain ATCC MYA-4681 / CBS 112371)</name>
    <name type="common">Trichophyton mentagrophytes</name>
    <dbReference type="NCBI Taxonomy" id="663331"/>
    <lineage>
        <taxon>Eukaryota</taxon>
        <taxon>Fungi</taxon>
        <taxon>Dikarya</taxon>
        <taxon>Ascomycota</taxon>
        <taxon>Pezizomycotina</taxon>
        <taxon>Eurotiomycetes</taxon>
        <taxon>Eurotiomycetidae</taxon>
        <taxon>Onygenales</taxon>
        <taxon>Arthrodermataceae</taxon>
        <taxon>Trichophyton</taxon>
    </lineage>
</organism>
<gene>
    <name type="ORF">ARB_05732-2</name>
</gene>
<accession>P0DN31</accession>
<accession>D4ANC7</accession>
<comment type="function">
    <text evidence="4">Catalyzes the removal of elemental sulfur from cysteine to produce alanine (By similarity). It supplies the inorganic sulfur for iron-sulfur (Fe-S) clusters (By similarity). Plays a role in both tRNA-processing and mitochondrial metabolism (By similarity). Involved in the 2-thio-modification of both 5-carboxymethylaminomethyl-2-thiouridine in mitochondrial tRNAs and 5-methoxycarbonylmethyl-2-thiouridine (mcm5s2U) in cytoplasmic tRNAs (By similarity).</text>
</comment>
<comment type="catalytic activity">
    <reaction evidence="4">
        <text>(sulfur carrier)-H + L-cysteine = (sulfur carrier)-SH + L-alanine</text>
        <dbReference type="Rhea" id="RHEA:43892"/>
        <dbReference type="Rhea" id="RHEA-COMP:14737"/>
        <dbReference type="Rhea" id="RHEA-COMP:14739"/>
        <dbReference type="ChEBI" id="CHEBI:29917"/>
        <dbReference type="ChEBI" id="CHEBI:35235"/>
        <dbReference type="ChEBI" id="CHEBI:57972"/>
        <dbReference type="ChEBI" id="CHEBI:64428"/>
        <dbReference type="EC" id="2.8.1.7"/>
    </reaction>
</comment>
<comment type="cofactor">
    <cofactor evidence="3">
        <name>pyridoxal 5'-phosphate</name>
        <dbReference type="ChEBI" id="CHEBI:597326"/>
    </cofactor>
</comment>
<comment type="subcellular location">
    <subcellularLocation>
        <location evidence="4">Mitochondrion</location>
    </subcellularLocation>
</comment>
<comment type="similarity">
    <text evidence="7">Belongs to the class-V pyridoxal-phosphate-dependent aminotransferase family. NifS/IscS subfamily.</text>
</comment>
<comment type="sequence caution" evidence="7">
    <conflict type="erroneous gene model prediction">
        <sequence resource="EMBL-CDS" id="EFE35688"/>
    </conflict>
    <text>The predicted gene ARB_05732 has been split into 2 genes: ARB_05732-1 and ARB_05732-2.</text>
</comment>
<sequence length="503" mass="54691">MSNIAPQVLRHASRACSRRLSLSASLVRPAYSARTVTGSGSGGRRYVSGSQRHNAQAQTTVESAVKTEQKASVPGTAVTGDALANPSAGILKQATIMDEGNRPIYLDMQATTPTDPRVLDAMLPFLTGLYGNPHSRTHAYGWETEKATEQARSHVATLIGADPKEIIFTSGATESNNMSIKGVARFFGRSGKKKHIITTQTEHKCVLDSCRHLQDEGFEVTYLPVQSNGLIKIEDLEAAIRPETALVSIMTVNNEIGVIQPMKEIGALCRSKKVFFHTDAAQAVGKIPVDVNEWNVDLMSISGHKLYGPKGIGACYVRRRPRVRIDPLITGGGQERGLRSGTLAPPLVVGFGEACRLAKEEMEYDSKRISALSQRLLTSLLALEHTTLNGDPNRHYPGCVNVSFAYVEGESLLMALKDIALSSGSACTSASLEPSYVLRALGNSDESAHSSIRFGIGRFTTESEIDYVIKAVKERVTFLRELSPLWELVQEGVDLNTIEWSQH</sequence>
<protein>
    <recommendedName>
        <fullName evidence="4">Cysteine desulfurase, mitochondrial</fullName>
        <ecNumber evidence="4">2.8.1.7</ecNumber>
    </recommendedName>
</protein>
<name>NFS1_ARTBC</name>
<proteinExistence type="inferred from homology"/>